<keyword id="KW-1185">Reference proteome</keyword>
<name>Y463_MYCPN</name>
<reference key="1">
    <citation type="journal article" date="1996" name="Nucleic Acids Res.">
        <title>Complete sequence analysis of the genome of the bacterium Mycoplasma pneumoniae.</title>
        <authorList>
            <person name="Himmelreich R."/>
            <person name="Hilbert H."/>
            <person name="Plagens H."/>
            <person name="Pirkl E."/>
            <person name="Li B.-C."/>
            <person name="Herrmann R."/>
        </authorList>
    </citation>
    <scope>NUCLEOTIDE SEQUENCE [LARGE SCALE GENOMIC DNA]</scope>
    <source>
        <strain>ATCC 29342 / M129 / Subtype 1</strain>
    </source>
</reference>
<sequence length="157" mass="17842">MGGWMSCAPPIYTPHTNSWTESGWDRTSWWRWSAQRWSGWSFKIVRANKALRVMAKTKMPLVLIPPSPNKPYSKLAINQELHLTPHKKTSPATSSSLKPRPGPRGYLNARLSWRCPTLSRKVRVPTIKVPMVRAPSTKPSKTSSSNNPWPLTPRMRG</sequence>
<feature type="chain" id="PRO_0000210682" description="Uncharacterized protein MPN_463">
    <location>
        <begin position="1"/>
        <end position="157"/>
    </location>
</feature>
<feature type="region of interest" description="Disordered" evidence="1">
    <location>
        <begin position="76"/>
        <end position="105"/>
    </location>
</feature>
<feature type="region of interest" description="Disordered" evidence="1">
    <location>
        <begin position="132"/>
        <end position="157"/>
    </location>
</feature>
<feature type="compositionally biased region" description="Low complexity" evidence="1">
    <location>
        <begin position="135"/>
        <end position="148"/>
    </location>
</feature>
<accession>P75320</accession>
<dbReference type="EMBL" id="U00089">
    <property type="protein sequence ID" value="AAB96026.1"/>
    <property type="molecule type" value="Genomic_DNA"/>
</dbReference>
<dbReference type="PIR" id="S73704">
    <property type="entry name" value="S73704"/>
</dbReference>
<dbReference type="RefSeq" id="NP_110151.1">
    <property type="nucleotide sequence ID" value="NC_000912.1"/>
</dbReference>
<dbReference type="RefSeq" id="WP_010874819.1">
    <property type="nucleotide sequence ID" value="NZ_OU342337.1"/>
</dbReference>
<dbReference type="STRING" id="272634.MPN_463"/>
<dbReference type="EnsemblBacteria" id="AAB96026">
    <property type="protein sequence ID" value="AAB96026"/>
    <property type="gene ID" value="MPN_463"/>
</dbReference>
<dbReference type="KEGG" id="mpn:MPN_463"/>
<dbReference type="HOGENOM" id="CLU_1675942_0_0_14"/>
<dbReference type="BioCyc" id="MPNE272634:G1GJ3-759-MONOMER"/>
<dbReference type="Proteomes" id="UP000000808">
    <property type="component" value="Chromosome"/>
</dbReference>
<gene>
    <name type="ordered locus">MPN_463</name>
    <name type="ORF">H08_orf157a</name>
    <name type="ORF">MP378</name>
</gene>
<proteinExistence type="predicted"/>
<comment type="similarity">
    <text evidence="2">To M.pneumoniae MPN_091 and MPN_413.</text>
</comment>
<evidence type="ECO:0000256" key="1">
    <source>
        <dbReference type="SAM" id="MobiDB-lite"/>
    </source>
</evidence>
<evidence type="ECO:0000305" key="2"/>
<protein>
    <recommendedName>
        <fullName>Uncharacterized protein MPN_463</fullName>
    </recommendedName>
</protein>
<organism>
    <name type="scientific">Mycoplasma pneumoniae (strain ATCC 29342 / M129 / Subtype 1)</name>
    <name type="common">Mycoplasmoides pneumoniae</name>
    <dbReference type="NCBI Taxonomy" id="272634"/>
    <lineage>
        <taxon>Bacteria</taxon>
        <taxon>Bacillati</taxon>
        <taxon>Mycoplasmatota</taxon>
        <taxon>Mycoplasmoidales</taxon>
        <taxon>Mycoplasmoidaceae</taxon>
        <taxon>Mycoplasmoides</taxon>
    </lineage>
</organism>